<name>CCTM_TALIS</name>
<accession>A0A0U1LQD9</accession>
<sequence>MEPGTDVRRVLVIGAGAAGLLIAQVLKKHGVPCTVFEQDTKADARPRDWNYGIYWAQSYLAECLPPELVSQLESAQVDSHTPSGSDILPTFNLATGEPLISVSAPYSYRLQRRKFLNLISTGIDIQYGKRLTMVDSDNKTVTAVFEDSSQATGNLLIGTEGAHSRVREYLLGKERAAVIPSRIVASATVSRLPEREVSALRKLHPRYCIAIHPDGYFNWLGIHDEAAQSKDCTFMIILSWISESDTGLSGTAIAADLKERANTFGEPFRTVLQSIPSETTFWHNRLSSWPTQPWNSHNGTVTLAGDAAHPMTFHRGQGLNNAITDAAYFGRQLAALDTKSTESLSAVVTAFEEELWKRGNEAVTQSDINSLSVHNWEELKSSPLFTSGLKQRSST</sequence>
<feature type="signal peptide" evidence="2">
    <location>
        <begin position="1"/>
        <end position="23"/>
    </location>
</feature>
<feature type="chain" id="PRO_0000438666" description="FAD-dependent monooxygenase cctM">
    <location>
        <begin position="24"/>
        <end position="395"/>
    </location>
</feature>
<feature type="binding site" evidence="1">
    <location>
        <position position="37"/>
    </location>
    <ligand>
        <name>FAD</name>
        <dbReference type="ChEBI" id="CHEBI:57692"/>
    </ligand>
</feature>
<feature type="binding site" evidence="1">
    <location>
        <position position="52"/>
    </location>
    <ligand>
        <name>FAD</name>
        <dbReference type="ChEBI" id="CHEBI:57692"/>
    </ligand>
</feature>
<feature type="binding site" evidence="1">
    <location>
        <position position="112"/>
    </location>
    <ligand>
        <name>FAD</name>
        <dbReference type="ChEBI" id="CHEBI:57692"/>
    </ligand>
</feature>
<feature type="binding site" evidence="1">
    <location>
        <position position="306"/>
    </location>
    <ligand>
        <name>FAD</name>
        <dbReference type="ChEBI" id="CHEBI:57692"/>
    </ligand>
</feature>
<feature type="glycosylation site" description="N-linked (GlcNAc...) asparagine" evidence="3">
    <location>
        <position position="138"/>
    </location>
</feature>
<feature type="glycosylation site" description="N-linked (GlcNAc...) asparagine" evidence="3">
    <location>
        <position position="298"/>
    </location>
</feature>
<protein>
    <recommendedName>
        <fullName evidence="6">FAD-dependent monooxygenase cctM</fullName>
        <ecNumber evidence="8">1.-.-.-</ecNumber>
    </recommendedName>
    <alternativeName>
        <fullName evidence="6">Cyclochlorotine biosynthesis protein M</fullName>
    </alternativeName>
</protein>
<reference key="1">
    <citation type="journal article" date="2015" name="J. Biotechnol.">
        <title>Draft genome sequence of Talaromyces islandicus ('Penicillium islandicum') WF-38-12, a neglected mold with significant biotechnological potential.</title>
        <authorList>
            <person name="Schafhauser T."/>
            <person name="Wibberg D."/>
            <person name="Rueckert C."/>
            <person name="Winkler A."/>
            <person name="Flor L."/>
            <person name="van Pee K.-H."/>
            <person name="Fewer D.P."/>
            <person name="Sivonen K."/>
            <person name="Jahn L."/>
            <person name="Ludwig-Mueller J."/>
            <person name="Caradec T."/>
            <person name="Jacques P."/>
            <person name="Huijbers M.M.E."/>
            <person name="van Berkel W.J.H."/>
            <person name="Weber T."/>
            <person name="Wohlleben W."/>
            <person name="Kalinowski J."/>
        </authorList>
    </citation>
    <scope>NUCLEOTIDE SEQUENCE [LARGE SCALE GENOMIC DNA]</scope>
    <source>
        <strain>ATCC 26535 / WF-38-12</strain>
    </source>
</reference>
<reference key="2">
    <citation type="journal article" date="2016" name="Environ. Microbiol.">
        <title>The cyclochlorotine mycotoxin is produced by the nonribosomal peptide synthetase CctN in Talaromyces islandicus ('Penicillium islandicum').</title>
        <authorList>
            <person name="Schafhauser T."/>
            <person name="Kirchner N."/>
            <person name="Kulik A."/>
            <person name="Huijbers M.M."/>
            <person name="Flor L."/>
            <person name="Caradec T."/>
            <person name="Fewer D.P."/>
            <person name="Gross H."/>
            <person name="Jacques P."/>
            <person name="Jahn L."/>
            <person name="Jokela J."/>
            <person name="Leclere V."/>
            <person name="Ludwig-Mueller J."/>
            <person name="Sivonen K."/>
            <person name="van Berkel W.J."/>
            <person name="Weber T."/>
            <person name="Wohlleben W."/>
            <person name="van Pee K.H."/>
        </authorList>
    </citation>
    <scope>FUNCTION</scope>
</reference>
<reference key="3">
    <citation type="journal article" date="2021" name="Org. Lett.">
        <title>Biosynthesis of cyclochlorotine: identification of the genes involved in oxidative transformations and intramolecular O,N-transacylation.</title>
        <authorList>
            <person name="Jiang Y."/>
            <person name="Ozaki T."/>
            <person name="Liu C."/>
            <person name="Igarashi Y."/>
            <person name="Ye Y."/>
            <person name="Tang S."/>
            <person name="Ye T."/>
            <person name="Maruyama J.I."/>
            <person name="Minami A."/>
            <person name="Oikawa H."/>
        </authorList>
    </citation>
    <scope>FUNCTION</scope>
</reference>
<keyword id="KW-0274">FAD</keyword>
<keyword id="KW-0285">Flavoprotein</keyword>
<keyword id="KW-0325">Glycoprotein</keyword>
<keyword id="KW-0503">Monooxygenase</keyword>
<keyword id="KW-0560">Oxidoreductase</keyword>
<keyword id="KW-1185">Reference proteome</keyword>
<keyword id="KW-0732">Signal</keyword>
<organism>
    <name type="scientific">Talaromyces islandicus</name>
    <name type="common">Penicillium islandicum</name>
    <dbReference type="NCBI Taxonomy" id="28573"/>
    <lineage>
        <taxon>Eukaryota</taxon>
        <taxon>Fungi</taxon>
        <taxon>Dikarya</taxon>
        <taxon>Ascomycota</taxon>
        <taxon>Pezizomycotina</taxon>
        <taxon>Eurotiomycetes</taxon>
        <taxon>Eurotiomycetidae</taxon>
        <taxon>Eurotiales</taxon>
        <taxon>Trichocomaceae</taxon>
        <taxon>Talaromyces</taxon>
        <taxon>Talaromyces sect. Islandici</taxon>
    </lineage>
</organism>
<gene>
    <name evidence="6" type="primary">cctM</name>
    <name type="ORF">PISL3812_02618</name>
</gene>
<evidence type="ECO:0000250" key="1">
    <source>
        <dbReference type="UniProtKB" id="B8M9J8"/>
    </source>
</evidence>
<evidence type="ECO:0000255" key="2"/>
<evidence type="ECO:0000255" key="3">
    <source>
        <dbReference type="PROSITE-ProRule" id="PRU00498"/>
    </source>
</evidence>
<evidence type="ECO:0000269" key="4">
    <source>
    </source>
</evidence>
<evidence type="ECO:0000269" key="5">
    <source>
    </source>
</evidence>
<evidence type="ECO:0000303" key="6">
    <source>
    </source>
</evidence>
<evidence type="ECO:0000305" key="7"/>
<evidence type="ECO:0000305" key="8">
    <source>
    </source>
</evidence>
<evidence type="ECO:0000305" key="9">
    <source>
    </source>
</evidence>
<comment type="function">
    <text evidence="4 5 9">FAD-dependent monooxygenase; part of the gene cluster that mediates the biosynthesis of the mycotoxin cyclochlorotine, a hepatotoxic and carcinogenic cyclic chlorinated pentapeptide (PubMed:26954535, PubMed:33736433). The function of cctM within the pathway, if any, remains undetermined (PubMed:33736433). The NRPS cctN initially catalyzes the condensation of L-serine (Ser), Pro, L-2-aminobutyrate (2Abu), Ser, and beta-Phe in this order to produce isocyclotine. After the dichlorination of Pro2 catalyzed by cctP2 to produce isocyclochlorotine, the cctO-mediated transacylation of isocyclochlorotine can furnish cyclochlorotine. The subsequent hydroxylation of cyclochlorotine by cctR yields hydroxycyclochlorotine as the final product. CctP1 probably acts as a phenylalanine aminomutase and provides the uncommon building block beta-Phe. Furthermore, 2Abu can be synthesized from threonine by one of the threonine dehydratases and transaminases localized outside of the cluster. The functions of the remaining proteins encoded by the cluster, cctM and cctT, have not been identified yet (Probable) (PubMed:33736433).</text>
</comment>
<comment type="cofactor">
    <cofactor evidence="7">
        <name>FAD</name>
        <dbReference type="ChEBI" id="CHEBI:57692"/>
    </cofactor>
</comment>
<comment type="pathway">
    <text evidence="8">Mycotoxin biosynthesis.</text>
</comment>
<comment type="similarity">
    <text evidence="7">Belongs to the paxM FAD-dependent monooxygenase family.</text>
</comment>
<proteinExistence type="inferred from homology"/>
<dbReference type="EC" id="1.-.-.-" evidence="8"/>
<dbReference type="EMBL" id="CVMT01000002">
    <property type="protein sequence ID" value="CRG85571.1"/>
    <property type="molecule type" value="Genomic_DNA"/>
</dbReference>
<dbReference type="SMR" id="A0A0U1LQD9"/>
<dbReference type="STRING" id="28573.A0A0U1LQD9"/>
<dbReference type="GlyCosmos" id="A0A0U1LQD9">
    <property type="glycosylation" value="2 sites, No reported glycans"/>
</dbReference>
<dbReference type="OMA" id="HPMTFHR"/>
<dbReference type="OrthoDB" id="47494at2759"/>
<dbReference type="Proteomes" id="UP000054383">
    <property type="component" value="Unassembled WGS sequence"/>
</dbReference>
<dbReference type="GO" id="GO:0071949">
    <property type="term" value="F:FAD binding"/>
    <property type="evidence" value="ECO:0007669"/>
    <property type="project" value="InterPro"/>
</dbReference>
<dbReference type="GO" id="GO:0004497">
    <property type="term" value="F:monooxygenase activity"/>
    <property type="evidence" value="ECO:0007669"/>
    <property type="project" value="UniProtKB-KW"/>
</dbReference>
<dbReference type="Gene3D" id="3.50.50.60">
    <property type="entry name" value="FAD/NAD(P)-binding domain"/>
    <property type="match status" value="1"/>
</dbReference>
<dbReference type="InterPro" id="IPR002938">
    <property type="entry name" value="FAD-bd"/>
</dbReference>
<dbReference type="InterPro" id="IPR036188">
    <property type="entry name" value="FAD/NAD-bd_sf"/>
</dbReference>
<dbReference type="PANTHER" id="PTHR47178:SF3">
    <property type="entry name" value="FAD-BINDING DOMAIN-CONTAINING PROTEIN"/>
    <property type="match status" value="1"/>
</dbReference>
<dbReference type="PANTHER" id="PTHR47178">
    <property type="entry name" value="MONOOXYGENASE, FAD-BINDING"/>
    <property type="match status" value="1"/>
</dbReference>
<dbReference type="Pfam" id="PF01494">
    <property type="entry name" value="FAD_binding_3"/>
    <property type="match status" value="2"/>
</dbReference>
<dbReference type="PRINTS" id="PR00420">
    <property type="entry name" value="RNGMNOXGNASE"/>
</dbReference>
<dbReference type="SUPFAM" id="SSF51905">
    <property type="entry name" value="FAD/NAD(P)-binding domain"/>
    <property type="match status" value="1"/>
</dbReference>